<name>RECR_SHEB9</name>
<sequence>MKFSPLLDELIQSLRCLPGVGPKSAQRMAFQLLERDRKAGLKLASALSSAMSDVGHCQSCRTYTEETLCPICASHKRGTSSTICVVETPADVLAIEAGGHFTGRYFVLLGHLSPLDGVGPEELGLALLERHLASGDVAELILATNPTVEGEATAHFIADMARRHKVMISRIAHGVPVGGELEYVDSTTLALSFNGRLPL</sequence>
<comment type="function">
    <text evidence="1">May play a role in DNA repair. It seems to be involved in an RecBC-independent recombinational process of DNA repair. It may act with RecF and RecO.</text>
</comment>
<comment type="similarity">
    <text evidence="1">Belongs to the RecR family.</text>
</comment>
<evidence type="ECO:0000255" key="1">
    <source>
        <dbReference type="HAMAP-Rule" id="MF_00017"/>
    </source>
</evidence>
<proteinExistence type="inferred from homology"/>
<feature type="chain" id="PRO_1000074131" description="Recombination protein RecR">
    <location>
        <begin position="1"/>
        <end position="199"/>
    </location>
</feature>
<feature type="domain" description="Toprim" evidence="1">
    <location>
        <begin position="81"/>
        <end position="176"/>
    </location>
</feature>
<feature type="zinc finger region" description="C4-type" evidence="1">
    <location>
        <begin position="57"/>
        <end position="72"/>
    </location>
</feature>
<gene>
    <name evidence="1" type="primary">recR</name>
    <name type="ordered locus">Sbal195_2688</name>
</gene>
<reference key="1">
    <citation type="submission" date="2007-11" db="EMBL/GenBank/DDBJ databases">
        <title>Complete sequence of chromosome of Shewanella baltica OS195.</title>
        <authorList>
            <consortium name="US DOE Joint Genome Institute"/>
            <person name="Copeland A."/>
            <person name="Lucas S."/>
            <person name="Lapidus A."/>
            <person name="Barry K."/>
            <person name="Glavina del Rio T."/>
            <person name="Dalin E."/>
            <person name="Tice H."/>
            <person name="Pitluck S."/>
            <person name="Chain P."/>
            <person name="Malfatti S."/>
            <person name="Shin M."/>
            <person name="Vergez L."/>
            <person name="Schmutz J."/>
            <person name="Larimer F."/>
            <person name="Land M."/>
            <person name="Hauser L."/>
            <person name="Kyrpides N."/>
            <person name="Kim E."/>
            <person name="Brettar I."/>
            <person name="Rodrigues J."/>
            <person name="Konstantinidis K."/>
            <person name="Klappenbach J."/>
            <person name="Hofle M."/>
            <person name="Tiedje J."/>
            <person name="Richardson P."/>
        </authorList>
    </citation>
    <scope>NUCLEOTIDE SEQUENCE [LARGE SCALE GENOMIC DNA]</scope>
    <source>
        <strain>OS195</strain>
    </source>
</reference>
<protein>
    <recommendedName>
        <fullName evidence="1">Recombination protein RecR</fullName>
    </recommendedName>
</protein>
<keyword id="KW-0227">DNA damage</keyword>
<keyword id="KW-0233">DNA recombination</keyword>
<keyword id="KW-0234">DNA repair</keyword>
<keyword id="KW-0479">Metal-binding</keyword>
<keyword id="KW-0862">Zinc</keyword>
<keyword id="KW-0863">Zinc-finger</keyword>
<dbReference type="EMBL" id="CP000891">
    <property type="protein sequence ID" value="ABX49856.1"/>
    <property type="molecule type" value="Genomic_DNA"/>
</dbReference>
<dbReference type="RefSeq" id="WP_006082081.1">
    <property type="nucleotide sequence ID" value="NC_009997.1"/>
</dbReference>
<dbReference type="SMR" id="A9L594"/>
<dbReference type="GeneID" id="11772786"/>
<dbReference type="KEGG" id="sbn:Sbal195_2688"/>
<dbReference type="HOGENOM" id="CLU_060739_1_2_6"/>
<dbReference type="Proteomes" id="UP000000770">
    <property type="component" value="Chromosome"/>
</dbReference>
<dbReference type="GO" id="GO:0003677">
    <property type="term" value="F:DNA binding"/>
    <property type="evidence" value="ECO:0007669"/>
    <property type="project" value="UniProtKB-UniRule"/>
</dbReference>
<dbReference type="GO" id="GO:0008270">
    <property type="term" value="F:zinc ion binding"/>
    <property type="evidence" value="ECO:0007669"/>
    <property type="project" value="UniProtKB-KW"/>
</dbReference>
<dbReference type="GO" id="GO:0006310">
    <property type="term" value="P:DNA recombination"/>
    <property type="evidence" value="ECO:0007669"/>
    <property type="project" value="UniProtKB-UniRule"/>
</dbReference>
<dbReference type="GO" id="GO:0006281">
    <property type="term" value="P:DNA repair"/>
    <property type="evidence" value="ECO:0007669"/>
    <property type="project" value="UniProtKB-UniRule"/>
</dbReference>
<dbReference type="CDD" id="cd01025">
    <property type="entry name" value="TOPRIM_recR"/>
    <property type="match status" value="1"/>
</dbReference>
<dbReference type="FunFam" id="1.10.8.420:FF:000001">
    <property type="entry name" value="Recombination protein RecR"/>
    <property type="match status" value="1"/>
</dbReference>
<dbReference type="FunFam" id="3.40.1360.10:FF:000001">
    <property type="entry name" value="Recombination protein RecR"/>
    <property type="match status" value="1"/>
</dbReference>
<dbReference type="Gene3D" id="3.40.1360.10">
    <property type="match status" value="1"/>
</dbReference>
<dbReference type="Gene3D" id="6.10.250.240">
    <property type="match status" value="1"/>
</dbReference>
<dbReference type="Gene3D" id="1.10.8.420">
    <property type="entry name" value="RecR Domain 1"/>
    <property type="match status" value="1"/>
</dbReference>
<dbReference type="HAMAP" id="MF_00017">
    <property type="entry name" value="RecR"/>
    <property type="match status" value="1"/>
</dbReference>
<dbReference type="InterPro" id="IPR000093">
    <property type="entry name" value="DNA_Rcmb_RecR"/>
</dbReference>
<dbReference type="InterPro" id="IPR023627">
    <property type="entry name" value="Rcmb_RecR"/>
</dbReference>
<dbReference type="InterPro" id="IPR015967">
    <property type="entry name" value="Rcmb_RecR_Znf"/>
</dbReference>
<dbReference type="InterPro" id="IPR006171">
    <property type="entry name" value="TOPRIM_dom"/>
</dbReference>
<dbReference type="InterPro" id="IPR034137">
    <property type="entry name" value="TOPRIM_RecR"/>
</dbReference>
<dbReference type="NCBIfam" id="TIGR00615">
    <property type="entry name" value="recR"/>
    <property type="match status" value="1"/>
</dbReference>
<dbReference type="PANTHER" id="PTHR30446">
    <property type="entry name" value="RECOMBINATION PROTEIN RECR"/>
    <property type="match status" value="1"/>
</dbReference>
<dbReference type="PANTHER" id="PTHR30446:SF0">
    <property type="entry name" value="RECOMBINATION PROTEIN RECR"/>
    <property type="match status" value="1"/>
</dbReference>
<dbReference type="Pfam" id="PF21175">
    <property type="entry name" value="RecR_C"/>
    <property type="match status" value="1"/>
</dbReference>
<dbReference type="Pfam" id="PF21176">
    <property type="entry name" value="RecR_HhH"/>
    <property type="match status" value="1"/>
</dbReference>
<dbReference type="Pfam" id="PF02132">
    <property type="entry name" value="RecR_ZnF"/>
    <property type="match status" value="1"/>
</dbReference>
<dbReference type="Pfam" id="PF13662">
    <property type="entry name" value="Toprim_4"/>
    <property type="match status" value="1"/>
</dbReference>
<dbReference type="SMART" id="SM00493">
    <property type="entry name" value="TOPRIM"/>
    <property type="match status" value="1"/>
</dbReference>
<dbReference type="SUPFAM" id="SSF111304">
    <property type="entry name" value="Recombination protein RecR"/>
    <property type="match status" value="1"/>
</dbReference>
<dbReference type="PROSITE" id="PS50880">
    <property type="entry name" value="TOPRIM"/>
    <property type="match status" value="1"/>
</dbReference>
<organism>
    <name type="scientific">Shewanella baltica (strain OS195)</name>
    <dbReference type="NCBI Taxonomy" id="399599"/>
    <lineage>
        <taxon>Bacteria</taxon>
        <taxon>Pseudomonadati</taxon>
        <taxon>Pseudomonadota</taxon>
        <taxon>Gammaproteobacteria</taxon>
        <taxon>Alteromonadales</taxon>
        <taxon>Shewanellaceae</taxon>
        <taxon>Shewanella</taxon>
    </lineage>
</organism>
<accession>A9L594</accession>